<protein>
    <recommendedName>
        <fullName>Quinate repressor protein</fullName>
    </recommendedName>
</protein>
<evidence type="ECO:0000250" key="1"/>
<evidence type="ECO:0000256" key="2">
    <source>
        <dbReference type="SAM" id="MobiDB-lite"/>
    </source>
</evidence>
<evidence type="ECO:0000305" key="3"/>
<proteinExistence type="inferred from homology"/>
<feature type="chain" id="PRO_0000402437" description="Quinate repressor protein">
    <location>
        <begin position="1"/>
        <end position="820"/>
    </location>
</feature>
<feature type="region of interest" description="Disordered" evidence="2">
    <location>
        <begin position="25"/>
        <end position="79"/>
    </location>
</feature>
<feature type="compositionally biased region" description="Low complexity" evidence="2">
    <location>
        <begin position="59"/>
        <end position="71"/>
    </location>
</feature>
<name>QUTR_TALSN</name>
<comment type="function">
    <text evidence="1">Multi-domain repressor protein that negatively regulates transcription of the quinate utilization pathway genes. May mediate its repressor activity by binding directly to the qutA activator protein (By similarity).</text>
</comment>
<comment type="subunit">
    <text>Interacts with qutA; transcriptional activator of the quinate utilization pathway genes.</text>
</comment>
<comment type="domain">
    <text evidence="1">Is homologous throughout its length with the C-terminal 3 domains of the pentafunctional AROM protein. The function of the 2 C-terminal domains may be to act as a molecular sensor that detects the presence of quinate pathway intermediates as a prerequisite for the presumed conformational changes necessary for the control of transcription regulation (By similarity).</text>
</comment>
<comment type="similarity">
    <text evidence="3">In the N-terminal section; belongs to the shikimate kinase family.</text>
</comment>
<comment type="similarity">
    <text evidence="3">In the 2nd section; belongs to the type-I 3-dehydroquinase family.</text>
</comment>
<comment type="similarity">
    <text evidence="3">In the C-terminal section; belongs to the shikimate dehydrogenase family.</text>
</comment>
<comment type="sequence caution" evidence="3">
    <conflict type="erroneous gene model prediction">
        <sequence resource="EMBL-CDS" id="EED12813"/>
    </conflict>
    <text>The predicted gene TSTA_053310 has been split into 2 genes: TSTA_053310.1 and TSTA_053310.2.</text>
</comment>
<gene>
    <name type="primary">qutR</name>
    <name type="ORF">TSTA_053310.1</name>
</gene>
<accession>P0CI62</accession>
<accession>B8MQX8</accession>
<sequence>MDTASIRGLSWSTLDPASYNSRKRSFEQMLLQQDSNESSRRTSPSRTHSRVDLERHSSHIVSLSSSNGSPSLEDPENRLYESPASARQYYGDESLILVGFPSAGKKTLGLIASAALRREFVDFDTVFVGKTGLSPREYIEAHGATAYRSVEDELTSEVFRSRQKGCVLVGFFAMASNRQRRLLKSLSTTNPIIHIQRDLGNMIHRGDSDKDRLYRTYQLSEKMHRRFANFEFFNIFQPMADDKPLGPLRLKATEREFVRFLNGIFPQSEASRGLKNLCSSSYTYALQAPSSWLDDPQADYTELDSGADAVEILVEMSPQNQQDLFFKLSQRVAVLRKYCRVPIILDLETSATMNYIAQVNLLELVIRQAPDVIMVSLDMSPHLVKQLSLAKGHSKIIGKYHQKGPISENWDLTNLQTVIDKASLLHCSAIRLTGEAYETNNNFGCVRVVLEARKLSDLPVSCYNTGEYGRSSICLNPILSPVVLPSQSTKQGITLADAQRGLFSSFWRTKKNFTVFGQNVSYSLTPAMHNAACIACGMPHTCDYVESDRLARIREVFERESQGGLAIVYPYKTEVVQMMDEMSLDAKVIGAVNTVVIERISTNEGSPKLYLKGYNTDHIGIRTCIEKNLSPANAIRSQTSALIIGAGGMARAAIYACIKAGVRNICIFNRTEANARRLADYFATVYTNLRLTILTDLSTPWPTDLWHPTIIVSCIPAHKVGDNDAPDFLIPEQWLGSSTGGVFVEFAYKPLVTRLIRFMQSRRSQGWIVADGLDVLVEQGIAQFEILTDRPAPSHIMRRTVREQYSIAQNAHSDHETTET</sequence>
<keyword id="KW-0672">Quinate metabolism</keyword>
<keyword id="KW-1185">Reference proteome</keyword>
<keyword id="KW-0678">Repressor</keyword>
<keyword id="KW-0804">Transcription</keyword>
<keyword id="KW-0805">Transcription regulation</keyword>
<dbReference type="EMBL" id="EQ962659">
    <property type="protein sequence ID" value="EED12813.1"/>
    <property type="status" value="ALT_SEQ"/>
    <property type="molecule type" value="Genomic_DNA"/>
</dbReference>
<dbReference type="RefSeq" id="XP_002486924.1">
    <property type="nucleotide sequence ID" value="XM_002486879.1"/>
</dbReference>
<dbReference type="SMR" id="P0CI62"/>
<dbReference type="STRING" id="441959.P0CI62"/>
<dbReference type="eggNOG" id="KOG0692">
    <property type="taxonomic scope" value="Eukaryota"/>
</dbReference>
<dbReference type="HOGENOM" id="CLU_008871_0_1_1"/>
<dbReference type="InParanoid" id="P0CI62"/>
<dbReference type="OrthoDB" id="4415835at2759"/>
<dbReference type="Proteomes" id="UP000001745">
    <property type="component" value="Unassembled WGS sequence"/>
</dbReference>
<dbReference type="GO" id="GO:0003855">
    <property type="term" value="F:3-dehydroquinate dehydratase activity"/>
    <property type="evidence" value="ECO:0007669"/>
    <property type="project" value="InterPro"/>
</dbReference>
<dbReference type="GO" id="GO:0004764">
    <property type="term" value="F:shikimate 3-dehydrogenase (NADP+) activity"/>
    <property type="evidence" value="ECO:0007669"/>
    <property type="project" value="InterPro"/>
</dbReference>
<dbReference type="GO" id="GO:0009423">
    <property type="term" value="P:chorismate biosynthetic process"/>
    <property type="evidence" value="ECO:0007669"/>
    <property type="project" value="TreeGrafter"/>
</dbReference>
<dbReference type="GO" id="GO:0019630">
    <property type="term" value="P:quinate metabolic process"/>
    <property type="evidence" value="ECO:0007669"/>
    <property type="project" value="UniProtKB-KW"/>
</dbReference>
<dbReference type="GO" id="GO:0019632">
    <property type="term" value="P:shikimate metabolic process"/>
    <property type="evidence" value="ECO:0007669"/>
    <property type="project" value="TreeGrafter"/>
</dbReference>
<dbReference type="CDD" id="cd00502">
    <property type="entry name" value="DHQase_I"/>
    <property type="match status" value="1"/>
</dbReference>
<dbReference type="CDD" id="cd01065">
    <property type="entry name" value="NAD_bind_Shikimate_DH"/>
    <property type="match status" value="1"/>
</dbReference>
<dbReference type="Gene3D" id="3.20.20.70">
    <property type="entry name" value="Aldolase class I"/>
    <property type="match status" value="1"/>
</dbReference>
<dbReference type="Gene3D" id="3.40.50.10860">
    <property type="entry name" value="Leucine Dehydrogenase, chain A, domain 1"/>
    <property type="match status" value="1"/>
</dbReference>
<dbReference type="Gene3D" id="3.40.50.720">
    <property type="entry name" value="NAD(P)-binding Rossmann-like Domain"/>
    <property type="match status" value="1"/>
</dbReference>
<dbReference type="Gene3D" id="3.40.50.300">
    <property type="entry name" value="P-loop containing nucleotide triphosphate hydrolases"/>
    <property type="match status" value="1"/>
</dbReference>
<dbReference type="InterPro" id="IPR013785">
    <property type="entry name" value="Aldolase_TIM"/>
</dbReference>
<dbReference type="InterPro" id="IPR046346">
    <property type="entry name" value="Aminoacid_DH-like_N_sf"/>
</dbReference>
<dbReference type="InterPro" id="IPR001381">
    <property type="entry name" value="DHquinase_I"/>
</dbReference>
<dbReference type="InterPro" id="IPR036291">
    <property type="entry name" value="NAD(P)-bd_dom_sf"/>
</dbReference>
<dbReference type="InterPro" id="IPR027417">
    <property type="entry name" value="P-loop_NTPase"/>
</dbReference>
<dbReference type="InterPro" id="IPR041121">
    <property type="entry name" value="SDH_C"/>
</dbReference>
<dbReference type="InterPro" id="IPR031322">
    <property type="entry name" value="Shikimate/glucono_kinase"/>
</dbReference>
<dbReference type="InterPro" id="IPR013708">
    <property type="entry name" value="Shikimate_DH-bd_N"/>
</dbReference>
<dbReference type="InterPro" id="IPR022893">
    <property type="entry name" value="Shikimate_DH_fam"/>
</dbReference>
<dbReference type="InterPro" id="IPR006151">
    <property type="entry name" value="Shikm_DH/Glu-tRNA_Rdtase"/>
</dbReference>
<dbReference type="PANTHER" id="PTHR21089:SF1">
    <property type="entry name" value="BIFUNCTIONAL 3-DEHYDROQUINATE DEHYDRATASE_SHIKIMATE DEHYDROGENASE, CHLOROPLASTIC"/>
    <property type="match status" value="1"/>
</dbReference>
<dbReference type="PANTHER" id="PTHR21089">
    <property type="entry name" value="SHIKIMATE DEHYDROGENASE"/>
    <property type="match status" value="1"/>
</dbReference>
<dbReference type="Pfam" id="PF01487">
    <property type="entry name" value="DHquinase_I"/>
    <property type="match status" value="1"/>
</dbReference>
<dbReference type="Pfam" id="PF18317">
    <property type="entry name" value="SDH_C"/>
    <property type="match status" value="1"/>
</dbReference>
<dbReference type="Pfam" id="PF01488">
    <property type="entry name" value="Shikimate_DH"/>
    <property type="match status" value="1"/>
</dbReference>
<dbReference type="Pfam" id="PF08501">
    <property type="entry name" value="Shikimate_dh_N"/>
    <property type="match status" value="1"/>
</dbReference>
<dbReference type="Pfam" id="PF01202">
    <property type="entry name" value="SKI"/>
    <property type="match status" value="1"/>
</dbReference>
<dbReference type="SUPFAM" id="SSF53223">
    <property type="entry name" value="Aminoacid dehydrogenase-like, N-terminal domain"/>
    <property type="match status" value="1"/>
</dbReference>
<dbReference type="SUPFAM" id="SSF51735">
    <property type="entry name" value="NAD(P)-binding Rossmann-fold domains"/>
    <property type="match status" value="1"/>
</dbReference>
<dbReference type="SUPFAM" id="SSF52540">
    <property type="entry name" value="P-loop containing nucleoside triphosphate hydrolases"/>
    <property type="match status" value="1"/>
</dbReference>
<organism>
    <name type="scientific">Talaromyces stipitatus (strain ATCC 10500 / CBS 375.48 / QM 6759 / NRRL 1006)</name>
    <name type="common">Penicillium stipitatum</name>
    <dbReference type="NCBI Taxonomy" id="441959"/>
    <lineage>
        <taxon>Eukaryota</taxon>
        <taxon>Fungi</taxon>
        <taxon>Dikarya</taxon>
        <taxon>Ascomycota</taxon>
        <taxon>Pezizomycotina</taxon>
        <taxon>Eurotiomycetes</taxon>
        <taxon>Eurotiomycetidae</taxon>
        <taxon>Eurotiales</taxon>
        <taxon>Trichocomaceae</taxon>
        <taxon>Talaromyces</taxon>
        <taxon>Talaromyces sect. Talaromyces</taxon>
    </lineage>
</organism>
<reference key="1">
    <citation type="journal article" date="2015" name="Genome Announc.">
        <title>Genome sequence of the AIDS-associated pathogen Penicillium marneffei (ATCC18224) and its near taxonomic relative Talaromyces stipitatus (ATCC10500).</title>
        <authorList>
            <person name="Nierman W.C."/>
            <person name="Fedorova-Abrams N.D."/>
            <person name="Andrianopoulos A."/>
        </authorList>
    </citation>
    <scope>NUCLEOTIDE SEQUENCE [LARGE SCALE GENOMIC DNA]</scope>
    <source>
        <strain>ATCC 10500 / CBS 375.48 / QM 6759 / NRRL 1006</strain>
    </source>
</reference>